<evidence type="ECO:0000255" key="1">
    <source>
        <dbReference type="HAMAP-Rule" id="MF_00386"/>
    </source>
</evidence>
<evidence type="ECO:0000256" key="2">
    <source>
        <dbReference type="SAM" id="MobiDB-lite"/>
    </source>
</evidence>
<feature type="chain" id="PRO_1000013101" description="Putative membrane protein insertion efficiency factor">
    <location>
        <begin position="1"/>
        <end position="97"/>
    </location>
</feature>
<feature type="region of interest" description="Disordered" evidence="2">
    <location>
        <begin position="68"/>
        <end position="97"/>
    </location>
</feature>
<feature type="compositionally biased region" description="Polar residues" evidence="2">
    <location>
        <begin position="72"/>
        <end position="97"/>
    </location>
</feature>
<organism>
    <name type="scientific">Marinobacter nauticus (strain ATCC 700491 / DSM 11845 / VT8)</name>
    <name type="common">Marinobacter aquaeolei</name>
    <dbReference type="NCBI Taxonomy" id="351348"/>
    <lineage>
        <taxon>Bacteria</taxon>
        <taxon>Pseudomonadati</taxon>
        <taxon>Pseudomonadota</taxon>
        <taxon>Gammaproteobacteria</taxon>
        <taxon>Pseudomonadales</taxon>
        <taxon>Marinobacteraceae</taxon>
        <taxon>Marinobacter</taxon>
    </lineage>
</organism>
<sequence>MRQLLLLPIRFYQYAISPMMASHCRHYPTCSQYAVEAIQHHGPLKGGYLATARLLRCHPWAEGGYDPVPGTELNTAPRSGQACNPTESTHSTTQTRH</sequence>
<name>YIDD_MARN8</name>
<comment type="function">
    <text evidence="1">Could be involved in insertion of integral membrane proteins into the membrane.</text>
</comment>
<comment type="subcellular location">
    <subcellularLocation>
        <location evidence="1">Cell inner membrane</location>
        <topology evidence="1">Peripheral membrane protein</topology>
        <orientation evidence="1">Cytoplasmic side</orientation>
    </subcellularLocation>
</comment>
<comment type="similarity">
    <text evidence="1">Belongs to the UPF0161 family.</text>
</comment>
<keyword id="KW-0997">Cell inner membrane</keyword>
<keyword id="KW-1003">Cell membrane</keyword>
<keyword id="KW-0472">Membrane</keyword>
<accession>A1U7J5</accession>
<gene>
    <name type="ordered locus">Maqu_3896</name>
</gene>
<dbReference type="EMBL" id="CP000514">
    <property type="protein sequence ID" value="ABM20964.1"/>
    <property type="molecule type" value="Genomic_DNA"/>
</dbReference>
<dbReference type="STRING" id="351348.Maqu_3896"/>
<dbReference type="KEGG" id="maq:Maqu_3896"/>
<dbReference type="eggNOG" id="COG0759">
    <property type="taxonomic scope" value="Bacteria"/>
</dbReference>
<dbReference type="HOGENOM" id="CLU_144811_2_0_6"/>
<dbReference type="OrthoDB" id="9801753at2"/>
<dbReference type="Proteomes" id="UP000000998">
    <property type="component" value="Chromosome"/>
</dbReference>
<dbReference type="GO" id="GO:0005886">
    <property type="term" value="C:plasma membrane"/>
    <property type="evidence" value="ECO:0007669"/>
    <property type="project" value="UniProtKB-SubCell"/>
</dbReference>
<dbReference type="HAMAP" id="MF_00386">
    <property type="entry name" value="UPF0161_YidD"/>
    <property type="match status" value="1"/>
</dbReference>
<dbReference type="InterPro" id="IPR002696">
    <property type="entry name" value="Membr_insert_effic_factor_YidD"/>
</dbReference>
<dbReference type="NCBIfam" id="TIGR00278">
    <property type="entry name" value="membrane protein insertion efficiency factor YidD"/>
    <property type="match status" value="1"/>
</dbReference>
<dbReference type="PANTHER" id="PTHR33383">
    <property type="entry name" value="MEMBRANE PROTEIN INSERTION EFFICIENCY FACTOR-RELATED"/>
    <property type="match status" value="1"/>
</dbReference>
<dbReference type="PANTHER" id="PTHR33383:SF1">
    <property type="entry name" value="MEMBRANE PROTEIN INSERTION EFFICIENCY FACTOR-RELATED"/>
    <property type="match status" value="1"/>
</dbReference>
<dbReference type="Pfam" id="PF01809">
    <property type="entry name" value="YidD"/>
    <property type="match status" value="1"/>
</dbReference>
<dbReference type="SMART" id="SM01234">
    <property type="entry name" value="Haemolytic"/>
    <property type="match status" value="1"/>
</dbReference>
<proteinExistence type="inferred from homology"/>
<reference key="1">
    <citation type="journal article" date="2011" name="Appl. Environ. Microbiol.">
        <title>Genomic potential of Marinobacter aquaeolei, a biogeochemical 'opportunitroph'.</title>
        <authorList>
            <person name="Singer E."/>
            <person name="Webb E.A."/>
            <person name="Nelson W.C."/>
            <person name="Heidelberg J.F."/>
            <person name="Ivanova N."/>
            <person name="Pati A."/>
            <person name="Edwards K.J."/>
        </authorList>
    </citation>
    <scope>NUCLEOTIDE SEQUENCE [LARGE SCALE GENOMIC DNA]</scope>
    <source>
        <strain>ATCC 700491 / DSM 11845 / VT8</strain>
    </source>
</reference>
<protein>
    <recommendedName>
        <fullName evidence="1">Putative membrane protein insertion efficiency factor</fullName>
    </recommendedName>
</protein>